<dbReference type="EMBL" id="X06564">
    <property type="protein sequence ID" value="CAA29809.1"/>
    <property type="molecule type" value="mRNA"/>
</dbReference>
<dbReference type="EMBL" id="M32611">
    <property type="protein sequence ID" value="AAA41679.1"/>
    <property type="molecule type" value="Genomic_DNA"/>
</dbReference>
<dbReference type="PIR" id="S00846">
    <property type="entry name" value="IJRTNC"/>
</dbReference>
<dbReference type="RefSeq" id="NP_113709.1">
    <molecule id="P13596-1"/>
    <property type="nucleotide sequence ID" value="NM_031521.4"/>
</dbReference>
<dbReference type="PDB" id="1EPF">
    <property type="method" value="X-ray"/>
    <property type="resolution" value="1.85 A"/>
    <property type="chains" value="A/B/C/D=20-208"/>
</dbReference>
<dbReference type="PDB" id="1LWR">
    <property type="method" value="NMR"/>
    <property type="chains" value="A=612-705"/>
</dbReference>
<dbReference type="PDB" id="1QZ1">
    <property type="method" value="X-ray"/>
    <property type="resolution" value="2.00 A"/>
    <property type="chains" value="A=20-308"/>
</dbReference>
<dbReference type="PDBsum" id="1EPF"/>
<dbReference type="PDBsum" id="1LWR"/>
<dbReference type="PDBsum" id="1QZ1"/>
<dbReference type="BMRB" id="P13596"/>
<dbReference type="SMR" id="P13596"/>
<dbReference type="BioGRID" id="246729">
    <property type="interactions" value="20"/>
</dbReference>
<dbReference type="CORUM" id="P13596"/>
<dbReference type="FunCoup" id="P13596">
    <property type="interactions" value="859"/>
</dbReference>
<dbReference type="IntAct" id="P13596">
    <property type="interactions" value="5"/>
</dbReference>
<dbReference type="MINT" id="P13596"/>
<dbReference type="STRING" id="10116.ENSRNOP00000071509"/>
<dbReference type="GlyCosmos" id="P13596">
    <property type="glycosylation" value="6 sites, 2 glycans"/>
</dbReference>
<dbReference type="GlyGen" id="P13596">
    <property type="glycosylation" value="6 sites, 2 N-linked glycans (1 site)"/>
</dbReference>
<dbReference type="iPTMnet" id="P13596"/>
<dbReference type="PhosphoSitePlus" id="P13596"/>
<dbReference type="SwissPalm" id="P13596"/>
<dbReference type="jPOST" id="P13596"/>
<dbReference type="PaxDb" id="10116-ENSRNOP00000048442"/>
<dbReference type="GeneID" id="24586"/>
<dbReference type="KEGG" id="rno:24586"/>
<dbReference type="UCSC" id="RGD:67378">
    <molecule id="P13596-1"/>
    <property type="organism name" value="rat"/>
</dbReference>
<dbReference type="AGR" id="RGD:67378"/>
<dbReference type="CTD" id="4684"/>
<dbReference type="RGD" id="67378">
    <property type="gene designation" value="Ncam1"/>
</dbReference>
<dbReference type="eggNOG" id="KOG3510">
    <property type="taxonomic scope" value="Eukaryota"/>
</dbReference>
<dbReference type="InParanoid" id="P13596"/>
<dbReference type="PhylomeDB" id="P13596"/>
<dbReference type="Reactome" id="R-RNO-375165">
    <property type="pathway name" value="NCAM signaling for neurite out-growth"/>
</dbReference>
<dbReference type="Reactome" id="R-RNO-419037">
    <property type="pathway name" value="NCAM1 interactions"/>
</dbReference>
<dbReference type="Reactome" id="R-RNO-445144">
    <property type="pathway name" value="Signal transduction by L1"/>
</dbReference>
<dbReference type="Reactome" id="R-RNO-5673001">
    <property type="pathway name" value="RAF/MAP kinase cascade"/>
</dbReference>
<dbReference type="EvolutionaryTrace" id="P13596"/>
<dbReference type="PRO" id="PR:P13596"/>
<dbReference type="Proteomes" id="UP000002494">
    <property type="component" value="Unplaced"/>
</dbReference>
<dbReference type="GO" id="GO:0030424">
    <property type="term" value="C:axon"/>
    <property type="evidence" value="ECO:0000266"/>
    <property type="project" value="RGD"/>
</dbReference>
<dbReference type="GO" id="GO:0009986">
    <property type="term" value="C:cell surface"/>
    <property type="evidence" value="ECO:0000266"/>
    <property type="project" value="RGD"/>
</dbReference>
<dbReference type="GO" id="GO:0005911">
    <property type="term" value="C:cell-cell junction"/>
    <property type="evidence" value="ECO:0000266"/>
    <property type="project" value="RGD"/>
</dbReference>
<dbReference type="GO" id="GO:0005737">
    <property type="term" value="C:cytoplasm"/>
    <property type="evidence" value="ECO:0000314"/>
    <property type="project" value="RGD"/>
</dbReference>
<dbReference type="GO" id="GO:0009897">
    <property type="term" value="C:external side of plasma membrane"/>
    <property type="evidence" value="ECO:0000266"/>
    <property type="project" value="RGD"/>
</dbReference>
<dbReference type="GO" id="GO:0098978">
    <property type="term" value="C:glutamatergic synapse"/>
    <property type="evidence" value="ECO:0000314"/>
    <property type="project" value="SynGO"/>
</dbReference>
<dbReference type="GO" id="GO:0030426">
    <property type="term" value="C:growth cone"/>
    <property type="evidence" value="ECO:0000266"/>
    <property type="project" value="RGD"/>
</dbReference>
<dbReference type="GO" id="GO:0043005">
    <property type="term" value="C:neuron projection"/>
    <property type="evidence" value="ECO:0000318"/>
    <property type="project" value="GO_Central"/>
</dbReference>
<dbReference type="GO" id="GO:0043025">
    <property type="term" value="C:neuronal cell body"/>
    <property type="evidence" value="ECO:0000314"/>
    <property type="project" value="RGD"/>
</dbReference>
<dbReference type="GO" id="GO:0005886">
    <property type="term" value="C:plasma membrane"/>
    <property type="evidence" value="ECO:0000304"/>
    <property type="project" value="Reactome"/>
</dbReference>
<dbReference type="GO" id="GO:0045211">
    <property type="term" value="C:postsynaptic membrane"/>
    <property type="evidence" value="ECO:0000314"/>
    <property type="project" value="SynGO"/>
</dbReference>
<dbReference type="GO" id="GO:0042734">
    <property type="term" value="C:presynaptic membrane"/>
    <property type="evidence" value="ECO:0000314"/>
    <property type="project" value="SynGO"/>
</dbReference>
<dbReference type="GO" id="GO:0098685">
    <property type="term" value="C:Schaffer collateral - CA1 synapse"/>
    <property type="evidence" value="ECO:0000314"/>
    <property type="project" value="SynGO"/>
</dbReference>
<dbReference type="GO" id="GO:0008092">
    <property type="term" value="F:cytoskeletal protein binding"/>
    <property type="evidence" value="ECO:0000304"/>
    <property type="project" value="RGD"/>
</dbReference>
<dbReference type="GO" id="GO:0005104">
    <property type="term" value="F:fibroblast growth factor receptor binding"/>
    <property type="evidence" value="ECO:0000304"/>
    <property type="project" value="RGD"/>
</dbReference>
<dbReference type="GO" id="GO:0008201">
    <property type="term" value="F:heparin binding"/>
    <property type="evidence" value="ECO:0007669"/>
    <property type="project" value="UniProtKB-KW"/>
</dbReference>
<dbReference type="GO" id="GO:0030275">
    <property type="term" value="F:LRR domain binding"/>
    <property type="evidence" value="ECO:0000353"/>
    <property type="project" value="RGD"/>
</dbReference>
<dbReference type="GO" id="GO:0019902">
    <property type="term" value="F:phosphatase binding"/>
    <property type="evidence" value="ECO:0000314"/>
    <property type="project" value="RGD"/>
</dbReference>
<dbReference type="GO" id="GO:0031100">
    <property type="term" value="P:animal organ regeneration"/>
    <property type="evidence" value="ECO:0000270"/>
    <property type="project" value="RGD"/>
</dbReference>
<dbReference type="GO" id="GO:0007413">
    <property type="term" value="P:axonal fasciculation"/>
    <property type="evidence" value="ECO:0000315"/>
    <property type="project" value="RGD"/>
</dbReference>
<dbReference type="GO" id="GO:0048149">
    <property type="term" value="P:behavioral response to ethanol"/>
    <property type="evidence" value="ECO:0000270"/>
    <property type="project" value="RGD"/>
</dbReference>
<dbReference type="GO" id="GO:0016338">
    <property type="term" value="P:calcium-independent cell-cell adhesion via plasma membrane cell-adhesion molecules"/>
    <property type="evidence" value="ECO:0000304"/>
    <property type="project" value="RGD"/>
</dbReference>
<dbReference type="GO" id="GO:0019722">
    <property type="term" value="P:calcium-mediated signaling"/>
    <property type="evidence" value="ECO:0000266"/>
    <property type="project" value="RGD"/>
</dbReference>
<dbReference type="GO" id="GO:0007155">
    <property type="term" value="P:cell adhesion"/>
    <property type="evidence" value="ECO:0000304"/>
    <property type="project" value="RGD"/>
</dbReference>
<dbReference type="GO" id="GO:0007166">
    <property type="term" value="P:cell surface receptor signaling pathway"/>
    <property type="evidence" value="ECO:0000266"/>
    <property type="project" value="RGD"/>
</dbReference>
<dbReference type="GO" id="GO:0071361">
    <property type="term" value="P:cellular response to ethanol"/>
    <property type="evidence" value="ECO:0000314"/>
    <property type="project" value="RGD"/>
</dbReference>
<dbReference type="GO" id="GO:1902618">
    <property type="term" value="P:cellular response to fluoride"/>
    <property type="evidence" value="ECO:0000270"/>
    <property type="project" value="RGD"/>
</dbReference>
<dbReference type="GO" id="GO:0071219">
    <property type="term" value="P:cellular response to molecule of bacterial origin"/>
    <property type="evidence" value="ECO:0000270"/>
    <property type="project" value="RGD"/>
</dbReference>
<dbReference type="GO" id="GO:0071679">
    <property type="term" value="P:commissural neuron axon guidance"/>
    <property type="evidence" value="ECO:0000266"/>
    <property type="project" value="RGD"/>
</dbReference>
<dbReference type="GO" id="GO:0001837">
    <property type="term" value="P:epithelial to mesenchymal transition"/>
    <property type="evidence" value="ECO:0000250"/>
    <property type="project" value="UniProtKB"/>
</dbReference>
<dbReference type="GO" id="GO:0034109">
    <property type="term" value="P:homotypic cell-cell adhesion"/>
    <property type="evidence" value="ECO:0000266"/>
    <property type="project" value="RGD"/>
</dbReference>
<dbReference type="GO" id="GO:0007611">
    <property type="term" value="P:learning or memory"/>
    <property type="evidence" value="ECO:0000314"/>
    <property type="project" value="RGD"/>
</dbReference>
<dbReference type="GO" id="GO:0072375">
    <property type="term" value="P:medium-term memory"/>
    <property type="evidence" value="ECO:0000270"/>
    <property type="project" value="RGD"/>
</dbReference>
<dbReference type="GO" id="GO:0050804">
    <property type="term" value="P:modulation of chemical synaptic transmission"/>
    <property type="evidence" value="ECO:0000314"/>
    <property type="project" value="SynGO"/>
</dbReference>
<dbReference type="GO" id="GO:0033555">
    <property type="term" value="P:multicellular organismal response to stress"/>
    <property type="evidence" value="ECO:0000314"/>
    <property type="project" value="RGD"/>
</dbReference>
<dbReference type="GO" id="GO:0043069">
    <property type="term" value="P:negative regulation of programmed cell death"/>
    <property type="evidence" value="ECO:0000315"/>
    <property type="project" value="RGD"/>
</dbReference>
<dbReference type="GO" id="GO:0048666">
    <property type="term" value="P:neuron development"/>
    <property type="evidence" value="ECO:0000314"/>
    <property type="project" value="RGD"/>
</dbReference>
<dbReference type="GO" id="GO:0031175">
    <property type="term" value="P:neuron projection development"/>
    <property type="evidence" value="ECO:0000266"/>
    <property type="project" value="RGD"/>
</dbReference>
<dbReference type="GO" id="GO:0014012">
    <property type="term" value="P:peripheral nervous system axon regeneration"/>
    <property type="evidence" value="ECO:0000270"/>
    <property type="project" value="RGD"/>
</dbReference>
<dbReference type="GO" id="GO:0050850">
    <property type="term" value="P:positive regulation of calcium-mediated signaling"/>
    <property type="evidence" value="ECO:0000266"/>
    <property type="project" value="RGD"/>
</dbReference>
<dbReference type="GO" id="GO:0060045">
    <property type="term" value="P:positive regulation of cardiac muscle cell proliferation"/>
    <property type="evidence" value="ECO:0000315"/>
    <property type="project" value="RGD"/>
</dbReference>
<dbReference type="GO" id="GO:0001928">
    <property type="term" value="P:regulation of exocyst assembly"/>
    <property type="evidence" value="ECO:0000266"/>
    <property type="project" value="RGD"/>
</dbReference>
<dbReference type="GO" id="GO:2001260">
    <property type="term" value="P:regulation of semaphorin-plexin signaling pathway"/>
    <property type="evidence" value="ECO:0000266"/>
    <property type="project" value="RGD"/>
</dbReference>
<dbReference type="GO" id="GO:0014823">
    <property type="term" value="P:response to activity"/>
    <property type="evidence" value="ECO:0000270"/>
    <property type="project" value="RGD"/>
</dbReference>
<dbReference type="GO" id="GO:0042220">
    <property type="term" value="P:response to cocaine"/>
    <property type="evidence" value="ECO:0000314"/>
    <property type="project" value="RGD"/>
</dbReference>
<dbReference type="GO" id="GO:0010288">
    <property type="term" value="P:response to lead ion"/>
    <property type="evidence" value="ECO:0000314"/>
    <property type="project" value="RGD"/>
</dbReference>
<dbReference type="GO" id="GO:0043278">
    <property type="term" value="P:response to morphine"/>
    <property type="evidence" value="ECO:0000270"/>
    <property type="project" value="RGD"/>
</dbReference>
<dbReference type="GO" id="GO:0006979">
    <property type="term" value="P:response to oxidative stress"/>
    <property type="evidence" value="ECO:0000270"/>
    <property type="project" value="RGD"/>
</dbReference>
<dbReference type="GO" id="GO:0009410">
    <property type="term" value="P:response to xenobiotic stimulus"/>
    <property type="evidence" value="ECO:0000314"/>
    <property type="project" value="RGD"/>
</dbReference>
<dbReference type="GO" id="GO:0021794">
    <property type="term" value="P:thalamus development"/>
    <property type="evidence" value="ECO:0000314"/>
    <property type="project" value="RGD"/>
</dbReference>
<dbReference type="CDD" id="cd00063">
    <property type="entry name" value="FN3"/>
    <property type="match status" value="2"/>
</dbReference>
<dbReference type="CDD" id="cd00096">
    <property type="entry name" value="Ig"/>
    <property type="match status" value="2"/>
</dbReference>
<dbReference type="CDD" id="cd05865">
    <property type="entry name" value="IgI_1_NCAM-1"/>
    <property type="match status" value="1"/>
</dbReference>
<dbReference type="CDD" id="cd05730">
    <property type="entry name" value="IgI_3_NCAM-1"/>
    <property type="match status" value="1"/>
</dbReference>
<dbReference type="CDD" id="cd05869">
    <property type="entry name" value="IgI_NCAM-1"/>
    <property type="match status" value="1"/>
</dbReference>
<dbReference type="FunFam" id="2.60.40.10:FF:000086">
    <property type="entry name" value="Neural cell adhesion molecule 1"/>
    <property type="match status" value="1"/>
</dbReference>
<dbReference type="FunFam" id="2.60.40.10:FF:000173">
    <property type="entry name" value="Neural cell adhesion molecule 1"/>
    <property type="match status" value="1"/>
</dbReference>
<dbReference type="FunFam" id="2.60.40.10:FF:000151">
    <property type="entry name" value="neural cell adhesion molecule 1 isoform X1"/>
    <property type="match status" value="1"/>
</dbReference>
<dbReference type="FunFam" id="2.60.40.10:FF:000137">
    <property type="entry name" value="neural cell adhesion molecule 1 isoform X2"/>
    <property type="match status" value="1"/>
</dbReference>
<dbReference type="FunFam" id="2.60.40.10:FF:000149">
    <property type="entry name" value="neural cell adhesion molecule 1 isoform X2"/>
    <property type="match status" value="1"/>
</dbReference>
<dbReference type="FunFam" id="2.60.40.10:FF:000159">
    <property type="entry name" value="neural cell adhesion molecule 1 isoform X2"/>
    <property type="match status" value="1"/>
</dbReference>
<dbReference type="FunFam" id="2.60.40.10:FF:000221">
    <property type="entry name" value="neural cell adhesion molecule 1 isoform X2"/>
    <property type="match status" value="1"/>
</dbReference>
<dbReference type="Gene3D" id="2.60.40.10">
    <property type="entry name" value="Immunoglobulins"/>
    <property type="match status" value="7"/>
</dbReference>
<dbReference type="InterPro" id="IPR003961">
    <property type="entry name" value="FN3_dom"/>
</dbReference>
<dbReference type="InterPro" id="IPR036116">
    <property type="entry name" value="FN3_sf"/>
</dbReference>
<dbReference type="InterPro" id="IPR007110">
    <property type="entry name" value="Ig-like_dom"/>
</dbReference>
<dbReference type="InterPro" id="IPR036179">
    <property type="entry name" value="Ig-like_dom_sf"/>
</dbReference>
<dbReference type="InterPro" id="IPR013783">
    <property type="entry name" value="Ig-like_fold"/>
</dbReference>
<dbReference type="InterPro" id="IPR013098">
    <property type="entry name" value="Ig_I-set"/>
</dbReference>
<dbReference type="InterPro" id="IPR003599">
    <property type="entry name" value="Ig_sub"/>
</dbReference>
<dbReference type="InterPro" id="IPR003598">
    <property type="entry name" value="Ig_sub2"/>
</dbReference>
<dbReference type="InterPro" id="IPR009138">
    <property type="entry name" value="Neural_cell_adh"/>
</dbReference>
<dbReference type="PANTHER" id="PTHR10075">
    <property type="entry name" value="BASIGIN RELATED"/>
    <property type="match status" value="1"/>
</dbReference>
<dbReference type="PANTHER" id="PTHR10075:SF14">
    <property type="entry name" value="CELL ADHESION MOLECULE DSCAM2-RELATED"/>
    <property type="match status" value="1"/>
</dbReference>
<dbReference type="Pfam" id="PF00041">
    <property type="entry name" value="fn3"/>
    <property type="match status" value="2"/>
</dbReference>
<dbReference type="Pfam" id="PF07679">
    <property type="entry name" value="I-set"/>
    <property type="match status" value="2"/>
</dbReference>
<dbReference type="Pfam" id="PF13927">
    <property type="entry name" value="Ig_3"/>
    <property type="match status" value="3"/>
</dbReference>
<dbReference type="PRINTS" id="PR01838">
    <property type="entry name" value="NCAMFAMILY"/>
</dbReference>
<dbReference type="SMART" id="SM00060">
    <property type="entry name" value="FN3"/>
    <property type="match status" value="2"/>
</dbReference>
<dbReference type="SMART" id="SM00409">
    <property type="entry name" value="IG"/>
    <property type="match status" value="5"/>
</dbReference>
<dbReference type="SMART" id="SM00408">
    <property type="entry name" value="IGc2"/>
    <property type="match status" value="5"/>
</dbReference>
<dbReference type="SUPFAM" id="SSF49265">
    <property type="entry name" value="Fibronectin type III"/>
    <property type="match status" value="1"/>
</dbReference>
<dbReference type="SUPFAM" id="SSF48726">
    <property type="entry name" value="Immunoglobulin"/>
    <property type="match status" value="5"/>
</dbReference>
<dbReference type="PROSITE" id="PS50853">
    <property type="entry name" value="FN3"/>
    <property type="match status" value="2"/>
</dbReference>
<dbReference type="PROSITE" id="PS50835">
    <property type="entry name" value="IG_LIKE"/>
    <property type="match status" value="5"/>
</dbReference>
<keyword id="KW-0002">3D-structure</keyword>
<keyword id="KW-0025">Alternative splicing</keyword>
<keyword id="KW-0130">Cell adhesion</keyword>
<keyword id="KW-1003">Cell membrane</keyword>
<keyword id="KW-0903">Direct protein sequencing</keyword>
<keyword id="KW-1015">Disulfide bond</keyword>
<keyword id="KW-0325">Glycoprotein</keyword>
<keyword id="KW-0358">Heparin-binding</keyword>
<keyword id="KW-0393">Immunoglobulin domain</keyword>
<keyword id="KW-0472">Membrane</keyword>
<keyword id="KW-0597">Phosphoprotein</keyword>
<keyword id="KW-1185">Reference proteome</keyword>
<keyword id="KW-0677">Repeat</keyword>
<keyword id="KW-0732">Signal</keyword>
<keyword id="KW-0812">Transmembrane</keyword>
<keyword id="KW-1133">Transmembrane helix</keyword>
<protein>
    <recommendedName>
        <fullName evidence="8">Neural cell adhesion molecule 1</fullName>
        <shortName>N-CAM-1</shortName>
        <shortName>NCAM-1</shortName>
    </recommendedName>
    <cdAntigenName>CD56</cdAntigenName>
</protein>
<proteinExistence type="evidence at protein level"/>
<organism>
    <name type="scientific">Rattus norvegicus</name>
    <name type="common">Rat</name>
    <dbReference type="NCBI Taxonomy" id="10116"/>
    <lineage>
        <taxon>Eukaryota</taxon>
        <taxon>Metazoa</taxon>
        <taxon>Chordata</taxon>
        <taxon>Craniata</taxon>
        <taxon>Vertebrata</taxon>
        <taxon>Euteleostomi</taxon>
        <taxon>Mammalia</taxon>
        <taxon>Eutheria</taxon>
        <taxon>Euarchontoglires</taxon>
        <taxon>Glires</taxon>
        <taxon>Rodentia</taxon>
        <taxon>Myomorpha</taxon>
        <taxon>Muroidea</taxon>
        <taxon>Muridae</taxon>
        <taxon>Murinae</taxon>
        <taxon>Rattus</taxon>
    </lineage>
</organism>
<gene>
    <name evidence="9" type="primary">Ncam1</name>
    <name type="synonym">Ncam</name>
</gene>
<comment type="function">
    <text>This protein is a cell adhesion molecule involved in neuron-neuron adhesion, neurite fasciculation, outgrowth of neurites, etc.</text>
</comment>
<comment type="subunit">
    <text evidence="3">Interacts with MDK. Found in a complex with SLC39A6, SLC39A10 and with NCAM1; this complex controls NCAM1 phosphorylation and integration into focal adhesion complexes during epithelial-tomesenchymal transition. Interacts with synaptic plasticity regulator PANTS.</text>
</comment>
<comment type="interaction">
    <interactant intactId="EBI-916499">
        <id>P13596</id>
    </interactant>
    <interactant intactId="EBI-8523405">
        <id>Q63237</id>
        <label>Fgfr2</label>
    </interactant>
    <organismsDiffer>false</organismsDiffer>
    <experiments>2</experiments>
</comment>
<comment type="interaction">
    <interactant intactId="EBI-916499">
        <id>P13596</id>
    </interactant>
    <interactant intactId="EBI-7953898">
        <id>P16092</id>
        <label>Fgfr1</label>
    </interactant>
    <organismsDiffer>true</organismsDiffer>
    <experiments>2</experiments>
</comment>
<comment type="subcellular location">
    <subcellularLocation>
        <location>Cell membrane</location>
        <topology>Single-pass type I membrane protein</topology>
    </subcellularLocation>
</comment>
<comment type="alternative products">
    <event type="alternative splicing"/>
    <isoform>
        <id>P13596-1</id>
        <name>1</name>
        <name>N-CAM 140</name>
        <sequence type="displayed"/>
    </isoform>
    <text>A number of isoforms are produced.</text>
</comment>
<comment type="PTM">
    <text evidence="2">Polysialylated by ST8SIA2 and ST8SIA4. Polysialylation modulates cell interactions by confering both attractive and repulsive properties that are highly regulated by ST8SIA2 and ST8SIA4. Polysialylation is formed on a-2,3-linked sialic acid of core glycans.</text>
</comment>
<name>NCAM1_RAT</name>
<reference key="1">
    <citation type="journal article" date="1987" name="J. Cell Biol.">
        <title>Identification of a cDNA clone that contains the complete coding sequence for a 140-kD rat NCAM polypeptide.</title>
        <authorList>
            <person name="Small S.J."/>
            <person name="Shull G.E."/>
            <person name="Santoni M.-J."/>
            <person name="Akeson R."/>
        </authorList>
    </citation>
    <scope>NUCLEOTIDE SEQUENCE [MRNA]</scope>
    <source>
        <tissue>Brain</tissue>
    </source>
</reference>
<reference key="2">
    <citation type="journal article" date="1990" name="J. Cell Biol.">
        <title>Expression of the unique NCAM VASE exon is independently regulated in distinct tissues during development.</title>
        <authorList>
            <person name="Small S.J."/>
            <person name="Akeson R."/>
        </authorList>
    </citation>
    <scope>NUCLEOTIDE SEQUENCE OF 340-381</scope>
</reference>
<reference key="3">
    <citation type="journal article" date="1988" name="Neuron">
        <title>Polypeptide variation in an N-CAM extracellular immunoglobulin-like fold is developmentally regulated through alternative splicing.</title>
        <authorList>
            <person name="Small S.J."/>
            <person name="Haines S.L."/>
            <person name="Akeson R.A."/>
        </authorList>
    </citation>
    <scope>NUCLEOTIDE SEQUENCE [GENOMIC DNA] OF 355-364</scope>
</reference>
<reference key="4">
    <citation type="submission" date="2007-07" db="UniProtKB">
        <authorList>
            <person name="Lubec G."/>
            <person name="Kang S.U."/>
        </authorList>
    </citation>
    <scope>PROTEIN SEQUENCE OF 38-48 AND 594-605</scope>
    <scope>IDENTIFICATION BY MASS SPECTROMETRY</scope>
    <source>
        <strain>Sprague-Dawley</strain>
        <tissue>Brain</tissue>
    </source>
</reference>
<reference key="5">
    <citation type="journal article" date="2012" name="Nat. Commun.">
        <title>Quantitative maps of protein phosphorylation sites across 14 different rat organs and tissues.</title>
        <authorList>
            <person name="Lundby A."/>
            <person name="Secher A."/>
            <person name="Lage K."/>
            <person name="Nordsborg N.B."/>
            <person name="Dmytriyev A."/>
            <person name="Lundby C."/>
            <person name="Olsen J.V."/>
        </authorList>
    </citation>
    <scope>PHOSPHORYLATION [LARGE SCALE ANALYSIS] AT SER-780 AND SER-784</scope>
    <scope>IDENTIFICATION BY MASS SPECTROMETRY [LARGE SCALE ANALYSIS]</scope>
</reference>
<sequence>MLRTKDLIWTLFFLGTAVSLQVDIVPSQGEISVGESKFFLCQVAGDAKDKDISWFSPNGEKLSPNQQRISVVWNDDDSSTLTIYNANIDDAGIYKCVVTAEDGTQSEATVNVKIFQKLMFKNAPTPQEFKEGEDAVIVCDVVSSLPPTIIWKHKGRDVILKKDVRFIVLSNNYLQIRGIKKTDEGTYRCEGRILARGEINFKDIQVIVNVPPTVQARQSIVNATANLGQSVTLVCDADGFPEPTMSWTKDGEPIENEEEDDEKHIFSDDSSELTIRNVDKNDEAEYVCIAENKAGEQDASIHLKVFAKPKITYVENQTAMELEEQVTLTCEASGDPIPSITWRTSTRNISSEEKASWTRPEKQETLDGHMVVRSHARVSSLTLKSIQYTDAGEYICTASNTIGQDSQSMYLEVQYAPKLQGPVAVYTWEGNQVNITCEVFAYPSATISWFRDGQLLPSSNYSNIKIYNTPSASYLEVTPDSENDFGNYNCTAVNRIGQESLEFILVQADTPSSPSIDRVEPYSSTAQVQFDEPEATGGVPILKYKAEWKSLGEEAWHSKWYDAKEANMEGIVTIMGLKPETRYAVRLAALNGKGLGEISAATEFKTQPVREPSAPKLEGQMGEDGNSIKVNLIKQDDGGSPIRHYLVKYRALASEWKPEIRLPSGSDHVMLKSLDWNAEYEVYVVAENQQGKSKAAHFVFRTSAQPTAIPANGSPTAGLSTGAIVGILIVIFVLLLVVMDITCYFLNKCGLLMCIAVNLCGKAGPGAKGKDMEEGKAAFSKDESKEPIVEVRTEEERTPNHDGGKHTEPNETTPLTEPEKGPVETKSEPQESEAKPAPTEVKTVPNEATQTKENESKA</sequence>
<accession>P13596</accession>
<evidence type="ECO:0000250" key="1"/>
<evidence type="ECO:0000250" key="2">
    <source>
        <dbReference type="UniProtKB" id="P13591"/>
    </source>
</evidence>
<evidence type="ECO:0000250" key="3">
    <source>
        <dbReference type="UniProtKB" id="P13595"/>
    </source>
</evidence>
<evidence type="ECO:0000255" key="4"/>
<evidence type="ECO:0000255" key="5">
    <source>
        <dbReference type="PROSITE-ProRule" id="PRU00114"/>
    </source>
</evidence>
<evidence type="ECO:0000255" key="6">
    <source>
        <dbReference type="PROSITE-ProRule" id="PRU00316"/>
    </source>
</evidence>
<evidence type="ECO:0000256" key="7">
    <source>
        <dbReference type="SAM" id="MobiDB-lite"/>
    </source>
</evidence>
<evidence type="ECO:0000305" key="8"/>
<evidence type="ECO:0000312" key="9">
    <source>
        <dbReference type="RGD" id="67378"/>
    </source>
</evidence>
<evidence type="ECO:0007744" key="10">
    <source>
    </source>
</evidence>
<evidence type="ECO:0007829" key="11">
    <source>
        <dbReference type="PDB" id="1EPF"/>
    </source>
</evidence>
<evidence type="ECO:0007829" key="12">
    <source>
        <dbReference type="PDB" id="1LWR"/>
    </source>
</evidence>
<evidence type="ECO:0007829" key="13">
    <source>
        <dbReference type="PDB" id="1QZ1"/>
    </source>
</evidence>
<feature type="signal peptide" evidence="1">
    <location>
        <begin position="1"/>
        <end position="19"/>
    </location>
</feature>
<feature type="chain" id="PRO_0000015015" description="Neural cell adhesion molecule 1">
    <location>
        <begin position="20"/>
        <end position="858"/>
    </location>
</feature>
<feature type="topological domain" description="Extracellular" evidence="4">
    <location>
        <begin position="20"/>
        <end position="721"/>
    </location>
</feature>
<feature type="transmembrane region" description="Helical" evidence="4">
    <location>
        <begin position="722"/>
        <end position="739"/>
    </location>
</feature>
<feature type="topological domain" description="Cytoplasmic" evidence="4">
    <location>
        <begin position="740"/>
        <end position="858"/>
    </location>
</feature>
<feature type="domain" description="Ig-like C2-type 1">
    <location>
        <begin position="20"/>
        <end position="111"/>
    </location>
</feature>
<feature type="domain" description="Ig-like C2-type 2">
    <location>
        <begin position="116"/>
        <end position="205"/>
    </location>
</feature>
<feature type="domain" description="Ig-like C2-type 3">
    <location>
        <begin position="212"/>
        <end position="302"/>
    </location>
</feature>
<feature type="domain" description="Ig-like C2-type 4">
    <location>
        <begin position="309"/>
        <end position="414"/>
    </location>
</feature>
<feature type="domain" description="Ig-like C2-type 5">
    <location>
        <begin position="417"/>
        <end position="502"/>
    </location>
</feature>
<feature type="domain" description="Fibronectin type-III 1" evidence="6">
    <location>
        <begin position="510"/>
        <end position="609"/>
    </location>
</feature>
<feature type="domain" description="Fibronectin type-III 2" evidence="6">
    <location>
        <begin position="611"/>
        <end position="706"/>
    </location>
</feature>
<feature type="region of interest" description="Disordered" evidence="7">
    <location>
        <begin position="765"/>
        <end position="858"/>
    </location>
</feature>
<feature type="compositionally biased region" description="Basic and acidic residues" evidence="7">
    <location>
        <begin position="768"/>
        <end position="809"/>
    </location>
</feature>
<feature type="compositionally biased region" description="Basic and acidic residues" evidence="7">
    <location>
        <begin position="817"/>
        <end position="834"/>
    </location>
</feature>
<feature type="binding site" evidence="4">
    <location>
        <begin position="152"/>
        <end position="156"/>
    </location>
    <ligand>
        <name>heparin</name>
        <dbReference type="ChEBI" id="CHEBI:28304"/>
    </ligand>
</feature>
<feature type="binding site" evidence="4">
    <location>
        <begin position="161"/>
        <end position="165"/>
    </location>
    <ligand>
        <name>heparin</name>
        <dbReference type="ChEBI" id="CHEBI:28304"/>
    </ligand>
</feature>
<feature type="modified residue" description="Phosphoserine" evidence="10">
    <location>
        <position position="780"/>
    </location>
</feature>
<feature type="modified residue" description="Phosphoserine" evidence="10">
    <location>
        <position position="784"/>
    </location>
</feature>
<feature type="glycosylation site" description="N-linked (GlcNAc...) asparagine" evidence="4">
    <location>
        <position position="222"/>
    </location>
</feature>
<feature type="glycosylation site" description="N-linked (GlcNAc...) asparagine" evidence="4">
    <location>
        <position position="316"/>
    </location>
</feature>
<feature type="glycosylation site" description="N-linked (GlcNAc...) asparagine" evidence="4">
    <location>
        <position position="348"/>
    </location>
</feature>
<feature type="glycosylation site" description="N-linked (GlcNAc...) asparagine" evidence="4">
    <location>
        <position position="434"/>
    </location>
</feature>
<feature type="glycosylation site" description="N-linked (GlcNAc...) asparagine" evidence="4">
    <location>
        <position position="460"/>
    </location>
</feature>
<feature type="glycosylation site" description="N-linked (GlcNAc...) asparagine" evidence="4">
    <location>
        <position position="489"/>
    </location>
</feature>
<feature type="disulfide bond" evidence="5">
    <location>
        <begin position="41"/>
        <end position="96"/>
    </location>
</feature>
<feature type="disulfide bond" evidence="5">
    <location>
        <begin position="139"/>
        <end position="189"/>
    </location>
</feature>
<feature type="disulfide bond" evidence="5">
    <location>
        <begin position="235"/>
        <end position="288"/>
    </location>
</feature>
<feature type="disulfide bond" evidence="5">
    <location>
        <begin position="330"/>
        <end position="396"/>
    </location>
</feature>
<feature type="disulfide bond" evidence="5">
    <location>
        <begin position="437"/>
        <end position="490"/>
    </location>
</feature>
<feature type="strand" evidence="11">
    <location>
        <begin position="22"/>
        <end position="32"/>
    </location>
</feature>
<feature type="strand" evidence="11">
    <location>
        <begin position="37"/>
        <end position="43"/>
    </location>
</feature>
<feature type="strand" evidence="11">
    <location>
        <begin position="51"/>
        <end position="55"/>
    </location>
</feature>
<feature type="strand" evidence="11">
    <location>
        <begin position="65"/>
        <end position="75"/>
    </location>
</feature>
<feature type="strand" evidence="11">
    <location>
        <begin position="78"/>
        <end position="83"/>
    </location>
</feature>
<feature type="helix" evidence="11">
    <location>
        <begin position="88"/>
        <end position="90"/>
    </location>
</feature>
<feature type="strand" evidence="11">
    <location>
        <begin position="92"/>
        <end position="99"/>
    </location>
</feature>
<feature type="strand" evidence="11">
    <location>
        <begin position="105"/>
        <end position="115"/>
    </location>
</feature>
<feature type="strand" evidence="11">
    <location>
        <begin position="118"/>
        <end position="122"/>
    </location>
</feature>
<feature type="strand" evidence="11">
    <location>
        <begin position="125"/>
        <end position="128"/>
    </location>
</feature>
<feature type="strand" evidence="11">
    <location>
        <begin position="135"/>
        <end position="137"/>
    </location>
</feature>
<feature type="strand" evidence="11">
    <location>
        <begin position="140"/>
        <end position="142"/>
    </location>
</feature>
<feature type="strand" evidence="11">
    <location>
        <begin position="148"/>
        <end position="153"/>
    </location>
</feature>
<feature type="helix" evidence="11">
    <location>
        <begin position="158"/>
        <end position="161"/>
    </location>
</feature>
<feature type="strand" evidence="11">
    <location>
        <begin position="166"/>
        <end position="168"/>
    </location>
</feature>
<feature type="strand" evidence="11">
    <location>
        <begin position="174"/>
        <end position="176"/>
    </location>
</feature>
<feature type="helix" evidence="11">
    <location>
        <begin position="181"/>
        <end position="183"/>
    </location>
</feature>
<feature type="strand" evidence="11">
    <location>
        <begin position="185"/>
        <end position="193"/>
    </location>
</feature>
<feature type="helix" evidence="11">
    <location>
        <begin position="194"/>
        <end position="196"/>
    </location>
</feature>
<feature type="strand" evidence="11">
    <location>
        <begin position="198"/>
        <end position="207"/>
    </location>
</feature>
<feature type="strand" evidence="13">
    <location>
        <begin position="219"/>
        <end position="224"/>
    </location>
</feature>
<feature type="strand" evidence="13">
    <location>
        <begin position="231"/>
        <end position="241"/>
    </location>
</feature>
<feature type="strand" evidence="13">
    <location>
        <begin position="244"/>
        <end position="249"/>
    </location>
</feature>
<feature type="strand" evidence="13">
    <location>
        <begin position="262"/>
        <end position="266"/>
    </location>
</feature>
<feature type="strand" evidence="13">
    <location>
        <begin position="272"/>
        <end position="275"/>
    </location>
</feature>
<feature type="helix" evidence="13">
    <location>
        <begin position="280"/>
        <end position="282"/>
    </location>
</feature>
<feature type="strand" evidence="13">
    <location>
        <begin position="284"/>
        <end position="292"/>
    </location>
</feature>
<feature type="strand" evidence="13">
    <location>
        <begin position="295"/>
        <end position="306"/>
    </location>
</feature>
<feature type="strand" evidence="12">
    <location>
        <begin position="616"/>
        <end position="622"/>
    </location>
</feature>
<feature type="turn" evidence="12">
    <location>
        <begin position="623"/>
        <end position="626"/>
    </location>
</feature>
<feature type="strand" evidence="12">
    <location>
        <begin position="627"/>
        <end position="633"/>
    </location>
</feature>
<feature type="strand" evidence="12">
    <location>
        <begin position="637"/>
        <end position="639"/>
    </location>
</feature>
<feature type="strand" evidence="12">
    <location>
        <begin position="642"/>
        <end position="654"/>
    </location>
</feature>
<feature type="strand" evidence="12">
    <location>
        <begin position="667"/>
        <end position="673"/>
    </location>
</feature>
<feature type="strand" evidence="12">
    <location>
        <begin position="679"/>
        <end position="688"/>
    </location>
</feature>
<feature type="strand" evidence="12">
    <location>
        <begin position="691"/>
        <end position="701"/>
    </location>
</feature>